<dbReference type="EMBL" id="FN394217">
    <property type="protein sequence ID" value="CAY86704.1"/>
    <property type="molecule type" value="Genomic_DNA"/>
</dbReference>
<dbReference type="SMR" id="C8ZIC3"/>
<dbReference type="HOGENOM" id="CLU_711875_0_0_1"/>
<dbReference type="OrthoDB" id="14223at4893"/>
<dbReference type="Proteomes" id="UP000000286">
    <property type="component" value="Chromosome XVI, Scaffold EC1118_1P2"/>
</dbReference>
<dbReference type="GO" id="GO:0005737">
    <property type="term" value="C:cytoplasm"/>
    <property type="evidence" value="ECO:0007669"/>
    <property type="project" value="UniProtKB-KW"/>
</dbReference>
<dbReference type="GO" id="GO:0005816">
    <property type="term" value="C:spindle pole body"/>
    <property type="evidence" value="ECO:0007669"/>
    <property type="project" value="UniProtKB-SubCell"/>
</dbReference>
<dbReference type="InterPro" id="IPR029330">
    <property type="entry name" value="Bbp1_C"/>
</dbReference>
<dbReference type="InterPro" id="IPR029328">
    <property type="entry name" value="Bbp1_N"/>
</dbReference>
<dbReference type="Pfam" id="PF15272">
    <property type="entry name" value="BBP1_C"/>
    <property type="match status" value="1"/>
</dbReference>
<dbReference type="Pfam" id="PF15271">
    <property type="entry name" value="BBP1_N"/>
    <property type="match status" value="1"/>
</dbReference>
<accession>C8ZIC3</accession>
<protein>
    <recommendedName>
        <fullName>Spindle pole component BBP1</fullName>
    </recommendedName>
    <alternativeName>
        <fullName>BFR1-binding protein 1</fullName>
    </alternativeName>
</protein>
<sequence>MNQEDNTGGGGIFGLFKWTKDALFGTDISPSMKYKDQEERRDRSRYAQDDTNFSMKFGNDSNRRSTNLSRSNSWSGLDSTLHRKYELLPEYNENGFNSIVNGDHHSKERIRSLRSPAPIVPREPLRNEPTDTFGHRLHTKRRTINELSNSQIPFIPPQEDDPLLSKLFNKDGVNEVRRSPYKLSVKDIPGKFPSPLTKRDEIDNYYVRDEDACHKNREYKKAYFDLFAQMDLNSRDLEDLCEDVREQREQFHRNEQTYKQAYEEMRAELVNELKKSKTLFENYYSLGQKYKSLKKVLDQTISHEAELATSRERLYQEEDLKNFEIQTLKQRLSDLELKYTNLQIEKDMQRDNYESEIHDLLLQLSLRNNERKDTSAGSNIFSTGQYDRTPFHNGNNSYDSNSHSWDTDYLKNIDGFIER</sequence>
<reference key="1">
    <citation type="journal article" date="2009" name="Proc. Natl. Acad. Sci. U.S.A.">
        <title>Eukaryote-to-eukaryote gene transfer events revealed by the genome sequence of the wine yeast Saccharomyces cerevisiae EC1118.</title>
        <authorList>
            <person name="Novo M."/>
            <person name="Bigey F."/>
            <person name="Beyne E."/>
            <person name="Galeote V."/>
            <person name="Gavory F."/>
            <person name="Mallet S."/>
            <person name="Cambon B."/>
            <person name="Legras J.-L."/>
            <person name="Wincker P."/>
            <person name="Casaregola S."/>
            <person name="Dequin S."/>
        </authorList>
    </citation>
    <scope>NUCLEOTIDE SEQUENCE [LARGE SCALE GENOMIC DNA]</scope>
    <source>
        <strain>Lalvin EC1118 / Prise de mousse</strain>
    </source>
</reference>
<proteinExistence type="inferred from homology"/>
<organism>
    <name type="scientific">Saccharomyces cerevisiae (strain Lalvin EC1118 / Prise de mousse)</name>
    <name type="common">Baker's yeast</name>
    <dbReference type="NCBI Taxonomy" id="643680"/>
    <lineage>
        <taxon>Eukaryota</taxon>
        <taxon>Fungi</taxon>
        <taxon>Dikarya</taxon>
        <taxon>Ascomycota</taxon>
        <taxon>Saccharomycotina</taxon>
        <taxon>Saccharomycetes</taxon>
        <taxon>Saccharomycetales</taxon>
        <taxon>Saccharomycetaceae</taxon>
        <taxon>Saccharomyces</taxon>
    </lineage>
</organism>
<evidence type="ECO:0000250" key="1"/>
<evidence type="ECO:0000250" key="2">
    <source>
        <dbReference type="UniProtKB" id="Q12365"/>
    </source>
</evidence>
<evidence type="ECO:0000255" key="3"/>
<evidence type="ECO:0000256" key="4">
    <source>
        <dbReference type="SAM" id="MobiDB-lite"/>
    </source>
</evidence>
<evidence type="ECO:0000305" key="5"/>
<keyword id="KW-0175">Coiled coil</keyword>
<keyword id="KW-0963">Cytoplasm</keyword>
<keyword id="KW-0206">Cytoskeleton</keyword>
<keyword id="KW-0597">Phosphoprotein</keyword>
<comment type="function">
    <text evidence="1">Component of the spindle pole body (SPB) required for insertion of the nascent SPB into the nuclear envelope and for the proper execution of spindle pole body (SPB) duplication. Connects the central plaque of the SPB with the half-bridge. Required for proper localization of CDC5 at the SPB and for proper M-phase progression (By similarity).</text>
</comment>
<comment type="subunit">
    <text evidence="1">Homodimer. Interacts with KAR1, MPS2 and SPC29.</text>
</comment>
<comment type="subcellular location">
    <subcellularLocation>
        <location evidence="1">Cytoplasm</location>
        <location evidence="1">Cytoskeleton</location>
        <location evidence="1">Microtubule organizing center</location>
        <location evidence="1">Spindle pole body</location>
    </subcellularLocation>
    <text evidence="1">Associates with the periphary of the central plaque.</text>
</comment>
<comment type="similarity">
    <text evidence="5">Belongs to the BBP1 family.</text>
</comment>
<gene>
    <name type="primary">BBP1</name>
    <name type="ORF">EC1118_1P2_0199g</name>
</gene>
<feature type="chain" id="PRO_0000409179" description="Spindle pole component BBP1">
    <location>
        <begin position="1"/>
        <end position="419"/>
    </location>
</feature>
<feature type="region of interest" description="Disordered" evidence="4">
    <location>
        <begin position="34"/>
        <end position="76"/>
    </location>
</feature>
<feature type="coiled-coil region" evidence="3">
    <location>
        <begin position="229"/>
        <end position="355"/>
    </location>
</feature>
<feature type="compositionally biased region" description="Basic and acidic residues" evidence="4">
    <location>
        <begin position="34"/>
        <end position="48"/>
    </location>
</feature>
<feature type="compositionally biased region" description="Low complexity" evidence="4">
    <location>
        <begin position="64"/>
        <end position="75"/>
    </location>
</feature>
<feature type="modified residue" description="Phosphoserine" evidence="2">
    <location>
        <position position="29"/>
    </location>
</feature>
<feature type="modified residue" description="Phosphoserine" evidence="2">
    <location>
        <position position="73"/>
    </location>
</feature>
<feature type="modified residue" description="Phosphoserine" evidence="2">
    <location>
        <position position="115"/>
    </location>
</feature>
<name>BBP1_YEAS8</name>